<keyword id="KW-0686">Riboflavin biosynthesis</keyword>
<keyword id="KW-0808">Transferase</keyword>
<name>RISB_SULSY</name>
<proteinExistence type="inferred from homology"/>
<comment type="function">
    <text evidence="1">Catalyzes the formation of 6,7-dimethyl-8-ribityllumazine by condensation of 5-amino-6-(D-ribitylamino)uracil with 3,4-dihydroxy-2-butanone 4-phosphate. This is the penultimate step in the biosynthesis of riboflavin.</text>
</comment>
<comment type="catalytic activity">
    <reaction evidence="1">
        <text>(2S)-2-hydroxy-3-oxobutyl phosphate + 5-amino-6-(D-ribitylamino)uracil = 6,7-dimethyl-8-(1-D-ribityl)lumazine + phosphate + 2 H2O + H(+)</text>
        <dbReference type="Rhea" id="RHEA:26152"/>
        <dbReference type="ChEBI" id="CHEBI:15377"/>
        <dbReference type="ChEBI" id="CHEBI:15378"/>
        <dbReference type="ChEBI" id="CHEBI:15934"/>
        <dbReference type="ChEBI" id="CHEBI:43474"/>
        <dbReference type="ChEBI" id="CHEBI:58201"/>
        <dbReference type="ChEBI" id="CHEBI:58830"/>
        <dbReference type="EC" id="2.5.1.78"/>
    </reaction>
</comment>
<comment type="pathway">
    <text evidence="1">Cofactor biosynthesis; riboflavin biosynthesis; riboflavin from 2-hydroxy-3-oxobutyl phosphate and 5-amino-6-(D-ribitylamino)uracil: step 1/2.</text>
</comment>
<comment type="subunit">
    <text evidence="1">Forms an icosahedral capsid composed of 60 subunits, arranged as a dodecamer of pentamers.</text>
</comment>
<comment type="similarity">
    <text evidence="1">Belongs to the DMRL synthase family.</text>
</comment>
<evidence type="ECO:0000255" key="1">
    <source>
        <dbReference type="HAMAP-Rule" id="MF_00178"/>
    </source>
</evidence>
<organism>
    <name type="scientific">Sulfurihydrogenibium sp. (strain YO3AOP1)</name>
    <dbReference type="NCBI Taxonomy" id="436114"/>
    <lineage>
        <taxon>Bacteria</taxon>
        <taxon>Pseudomonadati</taxon>
        <taxon>Aquificota</taxon>
        <taxon>Aquificia</taxon>
        <taxon>Aquificales</taxon>
        <taxon>Hydrogenothermaceae</taxon>
        <taxon>Sulfurihydrogenibium</taxon>
    </lineage>
</organism>
<protein>
    <recommendedName>
        <fullName evidence="1">6,7-dimethyl-8-ribityllumazine synthase</fullName>
        <shortName evidence="1">DMRL synthase</shortName>
        <shortName evidence="1">LS</shortName>
        <shortName evidence="1">Lumazine synthase</shortName>
        <ecNumber evidence="1">2.5.1.78</ecNumber>
    </recommendedName>
</protein>
<sequence length="154" mass="16370">MNIVEGKLSAEGLKFGIVVGRFNSFITERLLEGAIDCILRHGGSKENIEIVKVPGSFEIPLTAKKLAKSGKYDAVICLGAVIRGSTPHFDYVANEVTKGIAQVSLETEVPIGYGILTTDTIEQAVERAGTKMGNKGFDAAMVAIEMANVLKSIG</sequence>
<reference key="1">
    <citation type="journal article" date="2009" name="J. Bacteriol.">
        <title>Complete and draft genome sequences of six members of the Aquificales.</title>
        <authorList>
            <person name="Reysenbach A.-L."/>
            <person name="Hamamura N."/>
            <person name="Podar M."/>
            <person name="Griffiths E."/>
            <person name="Ferreira S."/>
            <person name="Hochstein R."/>
            <person name="Heidelberg J."/>
            <person name="Johnson J."/>
            <person name="Mead D."/>
            <person name="Pohorille A."/>
            <person name="Sarmiento M."/>
            <person name="Schweighofer K."/>
            <person name="Seshadri R."/>
            <person name="Voytek M.A."/>
        </authorList>
    </citation>
    <scope>NUCLEOTIDE SEQUENCE [LARGE SCALE GENOMIC DNA]</scope>
    <source>
        <strain>YO3AOP1</strain>
    </source>
</reference>
<accession>B2VAC3</accession>
<dbReference type="EC" id="2.5.1.78" evidence="1"/>
<dbReference type="EMBL" id="CP001080">
    <property type="protein sequence ID" value="ACD66896.1"/>
    <property type="molecule type" value="Genomic_DNA"/>
</dbReference>
<dbReference type="RefSeq" id="WP_012459957.1">
    <property type="nucleotide sequence ID" value="NC_010730.1"/>
</dbReference>
<dbReference type="SMR" id="B2VAC3"/>
<dbReference type="STRING" id="436114.SYO3AOP1_1285"/>
<dbReference type="KEGG" id="sul:SYO3AOP1_1285"/>
<dbReference type="eggNOG" id="COG0054">
    <property type="taxonomic scope" value="Bacteria"/>
</dbReference>
<dbReference type="HOGENOM" id="CLU_089358_1_1_0"/>
<dbReference type="UniPathway" id="UPA00275">
    <property type="reaction ID" value="UER00404"/>
</dbReference>
<dbReference type="GO" id="GO:0005829">
    <property type="term" value="C:cytosol"/>
    <property type="evidence" value="ECO:0007669"/>
    <property type="project" value="TreeGrafter"/>
</dbReference>
<dbReference type="GO" id="GO:0009349">
    <property type="term" value="C:riboflavin synthase complex"/>
    <property type="evidence" value="ECO:0007669"/>
    <property type="project" value="InterPro"/>
</dbReference>
<dbReference type="GO" id="GO:0000906">
    <property type="term" value="F:6,7-dimethyl-8-ribityllumazine synthase activity"/>
    <property type="evidence" value="ECO:0007669"/>
    <property type="project" value="UniProtKB-UniRule"/>
</dbReference>
<dbReference type="GO" id="GO:0009231">
    <property type="term" value="P:riboflavin biosynthetic process"/>
    <property type="evidence" value="ECO:0007669"/>
    <property type="project" value="UniProtKB-UniRule"/>
</dbReference>
<dbReference type="CDD" id="cd09209">
    <property type="entry name" value="Lumazine_synthase-I"/>
    <property type="match status" value="1"/>
</dbReference>
<dbReference type="FunFam" id="3.40.50.960:FF:000001">
    <property type="entry name" value="6,7-dimethyl-8-ribityllumazine synthase"/>
    <property type="match status" value="1"/>
</dbReference>
<dbReference type="Gene3D" id="3.40.50.960">
    <property type="entry name" value="Lumazine/riboflavin synthase"/>
    <property type="match status" value="1"/>
</dbReference>
<dbReference type="HAMAP" id="MF_00178">
    <property type="entry name" value="Lumazine_synth"/>
    <property type="match status" value="1"/>
</dbReference>
<dbReference type="InterPro" id="IPR034964">
    <property type="entry name" value="LS"/>
</dbReference>
<dbReference type="InterPro" id="IPR002180">
    <property type="entry name" value="LS/RS"/>
</dbReference>
<dbReference type="InterPro" id="IPR036467">
    <property type="entry name" value="LS/RS_sf"/>
</dbReference>
<dbReference type="NCBIfam" id="TIGR00114">
    <property type="entry name" value="lumazine-synth"/>
    <property type="match status" value="1"/>
</dbReference>
<dbReference type="NCBIfam" id="NF000812">
    <property type="entry name" value="PRK00061.1-4"/>
    <property type="match status" value="1"/>
</dbReference>
<dbReference type="PANTHER" id="PTHR21058:SF0">
    <property type="entry name" value="6,7-DIMETHYL-8-RIBITYLLUMAZINE SYNTHASE"/>
    <property type="match status" value="1"/>
</dbReference>
<dbReference type="PANTHER" id="PTHR21058">
    <property type="entry name" value="6,7-DIMETHYL-8-RIBITYLLUMAZINE SYNTHASE DMRL SYNTHASE LUMAZINE SYNTHASE"/>
    <property type="match status" value="1"/>
</dbReference>
<dbReference type="Pfam" id="PF00885">
    <property type="entry name" value="DMRL_synthase"/>
    <property type="match status" value="1"/>
</dbReference>
<dbReference type="SUPFAM" id="SSF52121">
    <property type="entry name" value="Lumazine synthase"/>
    <property type="match status" value="1"/>
</dbReference>
<feature type="chain" id="PRO_1000098239" description="6,7-dimethyl-8-ribityllumazine synthase">
    <location>
        <begin position="1"/>
        <end position="154"/>
    </location>
</feature>
<feature type="active site" description="Proton donor" evidence="1">
    <location>
        <position position="88"/>
    </location>
</feature>
<feature type="binding site" evidence="1">
    <location>
        <position position="22"/>
    </location>
    <ligand>
        <name>5-amino-6-(D-ribitylamino)uracil</name>
        <dbReference type="ChEBI" id="CHEBI:15934"/>
    </ligand>
</feature>
<feature type="binding site" evidence="1">
    <location>
        <begin position="56"/>
        <end position="58"/>
    </location>
    <ligand>
        <name>5-amino-6-(D-ribitylamino)uracil</name>
        <dbReference type="ChEBI" id="CHEBI:15934"/>
    </ligand>
</feature>
<feature type="binding site" evidence="1">
    <location>
        <begin position="80"/>
        <end position="82"/>
    </location>
    <ligand>
        <name>5-amino-6-(D-ribitylamino)uracil</name>
        <dbReference type="ChEBI" id="CHEBI:15934"/>
    </ligand>
</feature>
<feature type="binding site" evidence="1">
    <location>
        <begin position="85"/>
        <end position="86"/>
    </location>
    <ligand>
        <name>(2S)-2-hydroxy-3-oxobutyl phosphate</name>
        <dbReference type="ChEBI" id="CHEBI:58830"/>
    </ligand>
</feature>
<feature type="binding site" evidence="1">
    <location>
        <position position="113"/>
    </location>
    <ligand>
        <name>5-amino-6-(D-ribitylamino)uracil</name>
        <dbReference type="ChEBI" id="CHEBI:15934"/>
    </ligand>
</feature>
<feature type="binding site" evidence="1">
    <location>
        <position position="127"/>
    </location>
    <ligand>
        <name>(2S)-2-hydroxy-3-oxobutyl phosphate</name>
        <dbReference type="ChEBI" id="CHEBI:58830"/>
    </ligand>
</feature>
<gene>
    <name evidence="1" type="primary">ribH</name>
    <name type="ordered locus">SYO3AOP1_1285</name>
</gene>